<accession>P01928</accession>
<protein>
    <recommendedName>
        <fullName>Hemoglobin subunit alpha</fullName>
    </recommendedName>
    <alternativeName>
        <fullName>Alpha-globin</fullName>
    </alternativeName>
    <alternativeName>
        <fullName>Hemoglobin alpha chain</fullName>
    </alternativeName>
    <component>
        <recommendedName>
            <fullName evidence="2">Hemopressin</fullName>
        </recommendedName>
    </component>
</protein>
<reference key="1">
    <citation type="journal article" date="1973" name="Hoppe-Seyler's Z. Physiol. Chem.">
        <title>The amino acid sequences of the alpha and beta polypeptide chains of adult hemoglobin of the capuchin monkey (Cebus apella).</title>
        <authorList>
            <person name="Matsuda G."/>
            <person name="Maita T."/>
            <person name="Watanabe B."/>
            <person name="Araya A."/>
            <person name="Morokuma K."/>
            <person name="Ota Y."/>
            <person name="Goodman M."/>
            <person name="Barnabas J."/>
            <person name="Prychodko W."/>
        </authorList>
    </citation>
    <scope>PROTEIN SEQUENCE OF 2-142</scope>
</reference>
<sequence length="142" mass="15255">MVLSPADKTNVKTAWGKVGGHAGDYGAEALERMFLSFPTTKTYFPHFDLSHGSAQVKGHGKKVADALSNAVAHVDDMPNALSALSDLHAHKLRVDPVNFKLLSHCLLVTLAAHHPADFTPAVHASLDKFLASVSTVLTSKYR</sequence>
<feature type="initiator methionine" description="Removed" evidence="3">
    <location>
        <position position="1"/>
    </location>
</feature>
<feature type="chain" id="PRO_0000052592" description="Hemoglobin subunit alpha">
    <location>
        <begin position="2"/>
        <end position="142"/>
    </location>
</feature>
<feature type="peptide" id="PRO_0000455852" description="Hemopressin" evidence="2">
    <location>
        <begin position="96"/>
        <end position="104"/>
    </location>
</feature>
<feature type="domain" description="Globin" evidence="5">
    <location>
        <begin position="2"/>
        <end position="142"/>
    </location>
</feature>
<feature type="binding site" evidence="5">
    <location>
        <position position="59"/>
    </location>
    <ligand>
        <name>O2</name>
        <dbReference type="ChEBI" id="CHEBI:15379"/>
    </ligand>
</feature>
<feature type="binding site" description="proximal binding residue" evidence="5">
    <location>
        <position position="88"/>
    </location>
    <ligand>
        <name>heme b</name>
        <dbReference type="ChEBI" id="CHEBI:60344"/>
    </ligand>
    <ligandPart>
        <name>Fe</name>
        <dbReference type="ChEBI" id="CHEBI:18248"/>
    </ligandPart>
</feature>
<feature type="modified residue" description="Phosphoserine" evidence="4">
    <location>
        <position position="4"/>
    </location>
</feature>
<feature type="modified residue" description="N6-succinyllysine" evidence="1">
    <location>
        <position position="8"/>
    </location>
</feature>
<feature type="modified residue" description="Phosphothreonine" evidence="4">
    <location>
        <position position="9"/>
    </location>
</feature>
<feature type="modified residue" description="N6-succinyllysine" evidence="1">
    <location>
        <position position="12"/>
    </location>
</feature>
<feature type="modified residue" description="N6-acetyllysine; alternate" evidence="4">
    <location>
        <position position="17"/>
    </location>
</feature>
<feature type="modified residue" description="N6-succinyllysine; alternate" evidence="1">
    <location>
        <position position="17"/>
    </location>
</feature>
<feature type="modified residue" description="Phosphotyrosine" evidence="4">
    <location>
        <position position="25"/>
    </location>
</feature>
<feature type="modified residue" description="Phosphoserine" evidence="4">
    <location>
        <position position="36"/>
    </location>
</feature>
<feature type="modified residue" description="N6-succinyllysine" evidence="1">
    <location>
        <position position="41"/>
    </location>
</feature>
<feature type="modified residue" description="Phosphoserine" evidence="4">
    <location>
        <position position="50"/>
    </location>
</feature>
<feature type="modified residue" description="Phosphoserine" evidence="1">
    <location>
        <position position="103"/>
    </location>
</feature>
<feature type="modified residue" description="Phosphothreonine" evidence="1">
    <location>
        <position position="109"/>
    </location>
</feature>
<feature type="modified residue" description="Phosphoserine" evidence="1">
    <location>
        <position position="125"/>
    </location>
</feature>
<feature type="modified residue" description="Phosphoserine" evidence="1">
    <location>
        <position position="132"/>
    </location>
</feature>
<feature type="modified residue" description="Phosphothreonine" evidence="1">
    <location>
        <position position="135"/>
    </location>
</feature>
<feature type="modified residue" description="Phosphothreonine" evidence="1">
    <location>
        <position position="138"/>
    </location>
</feature>
<feature type="modified residue" description="Phosphoserine" evidence="1">
    <location>
        <position position="139"/>
    </location>
</feature>
<proteinExistence type="evidence at protein level"/>
<organism>
    <name type="scientific">Sapajus apella</name>
    <name type="common">Brown-capped capuchin</name>
    <name type="synonym">Cebus apella</name>
    <dbReference type="NCBI Taxonomy" id="9515"/>
    <lineage>
        <taxon>Eukaryota</taxon>
        <taxon>Metazoa</taxon>
        <taxon>Chordata</taxon>
        <taxon>Craniata</taxon>
        <taxon>Vertebrata</taxon>
        <taxon>Euteleostomi</taxon>
        <taxon>Mammalia</taxon>
        <taxon>Eutheria</taxon>
        <taxon>Euarchontoglires</taxon>
        <taxon>Primates</taxon>
        <taxon>Haplorrhini</taxon>
        <taxon>Platyrrhini</taxon>
        <taxon>Cebidae</taxon>
        <taxon>Cebinae</taxon>
        <taxon>Sapajus</taxon>
    </lineage>
</organism>
<dbReference type="PIR" id="A02254">
    <property type="entry name" value="HAMQA"/>
</dbReference>
<dbReference type="BMRB" id="P01928"/>
<dbReference type="SMR" id="P01928"/>
<dbReference type="Proteomes" id="UP000504640">
    <property type="component" value="Unplaced"/>
</dbReference>
<dbReference type="GO" id="GO:0072562">
    <property type="term" value="C:blood microparticle"/>
    <property type="evidence" value="ECO:0007669"/>
    <property type="project" value="TreeGrafter"/>
</dbReference>
<dbReference type="GO" id="GO:0031838">
    <property type="term" value="C:haptoglobin-hemoglobin complex"/>
    <property type="evidence" value="ECO:0007669"/>
    <property type="project" value="TreeGrafter"/>
</dbReference>
<dbReference type="GO" id="GO:0005833">
    <property type="term" value="C:hemoglobin complex"/>
    <property type="evidence" value="ECO:0007669"/>
    <property type="project" value="InterPro"/>
</dbReference>
<dbReference type="GO" id="GO:0031720">
    <property type="term" value="F:haptoglobin binding"/>
    <property type="evidence" value="ECO:0007669"/>
    <property type="project" value="TreeGrafter"/>
</dbReference>
<dbReference type="GO" id="GO:0020037">
    <property type="term" value="F:heme binding"/>
    <property type="evidence" value="ECO:0007669"/>
    <property type="project" value="InterPro"/>
</dbReference>
<dbReference type="GO" id="GO:0005506">
    <property type="term" value="F:iron ion binding"/>
    <property type="evidence" value="ECO:0007669"/>
    <property type="project" value="InterPro"/>
</dbReference>
<dbReference type="GO" id="GO:0043177">
    <property type="term" value="F:organic acid binding"/>
    <property type="evidence" value="ECO:0007669"/>
    <property type="project" value="TreeGrafter"/>
</dbReference>
<dbReference type="GO" id="GO:0019825">
    <property type="term" value="F:oxygen binding"/>
    <property type="evidence" value="ECO:0007669"/>
    <property type="project" value="InterPro"/>
</dbReference>
<dbReference type="GO" id="GO:0005344">
    <property type="term" value="F:oxygen carrier activity"/>
    <property type="evidence" value="ECO:0007669"/>
    <property type="project" value="UniProtKB-KW"/>
</dbReference>
<dbReference type="GO" id="GO:0004601">
    <property type="term" value="F:peroxidase activity"/>
    <property type="evidence" value="ECO:0007669"/>
    <property type="project" value="TreeGrafter"/>
</dbReference>
<dbReference type="GO" id="GO:0042744">
    <property type="term" value="P:hydrogen peroxide catabolic process"/>
    <property type="evidence" value="ECO:0007669"/>
    <property type="project" value="TreeGrafter"/>
</dbReference>
<dbReference type="CDD" id="cd08927">
    <property type="entry name" value="Hb-alpha-like"/>
    <property type="match status" value="1"/>
</dbReference>
<dbReference type="FunFam" id="1.10.490.10:FF:000002">
    <property type="entry name" value="Hemoglobin subunit alpha"/>
    <property type="match status" value="1"/>
</dbReference>
<dbReference type="Gene3D" id="1.10.490.10">
    <property type="entry name" value="Globins"/>
    <property type="match status" value="1"/>
</dbReference>
<dbReference type="InterPro" id="IPR000971">
    <property type="entry name" value="Globin"/>
</dbReference>
<dbReference type="InterPro" id="IPR009050">
    <property type="entry name" value="Globin-like_sf"/>
</dbReference>
<dbReference type="InterPro" id="IPR012292">
    <property type="entry name" value="Globin/Proto"/>
</dbReference>
<dbReference type="InterPro" id="IPR002338">
    <property type="entry name" value="Hemoglobin_a-typ"/>
</dbReference>
<dbReference type="InterPro" id="IPR050056">
    <property type="entry name" value="Hemoglobin_oxygen_transport"/>
</dbReference>
<dbReference type="InterPro" id="IPR002339">
    <property type="entry name" value="Hemoglobin_pi"/>
</dbReference>
<dbReference type="PANTHER" id="PTHR11442">
    <property type="entry name" value="HEMOGLOBIN FAMILY MEMBER"/>
    <property type="match status" value="1"/>
</dbReference>
<dbReference type="PANTHER" id="PTHR11442:SF48">
    <property type="entry name" value="HEMOGLOBIN SUBUNIT ALPHA"/>
    <property type="match status" value="1"/>
</dbReference>
<dbReference type="Pfam" id="PF00042">
    <property type="entry name" value="Globin"/>
    <property type="match status" value="1"/>
</dbReference>
<dbReference type="PRINTS" id="PR00612">
    <property type="entry name" value="ALPHAHAEM"/>
</dbReference>
<dbReference type="PRINTS" id="PR00815">
    <property type="entry name" value="PIHAEM"/>
</dbReference>
<dbReference type="SUPFAM" id="SSF46458">
    <property type="entry name" value="Globin-like"/>
    <property type="match status" value="1"/>
</dbReference>
<dbReference type="PROSITE" id="PS01033">
    <property type="entry name" value="GLOBIN"/>
    <property type="match status" value="1"/>
</dbReference>
<comment type="function">
    <text>Involved in oxygen transport from the lung to the various peripheral tissues.</text>
</comment>
<comment type="function">
    <molecule>Hemopressin</molecule>
    <text evidence="2">Hemopressin acts as an antagonist peptide of the cannabinoid receptor CNR1. Hemopressin-binding efficiently blocks cannabinoid receptor CNR1 and subsequent signaling.</text>
</comment>
<comment type="subunit">
    <text>Heterotetramer of two alpha chains and two beta chains.</text>
</comment>
<comment type="tissue specificity">
    <text>Red blood cells.</text>
</comment>
<comment type="similarity">
    <text evidence="5">Belongs to the globin family.</text>
</comment>
<evidence type="ECO:0000250" key="1">
    <source>
        <dbReference type="UniProtKB" id="P01942"/>
    </source>
</evidence>
<evidence type="ECO:0000250" key="2">
    <source>
        <dbReference type="UniProtKB" id="P01946"/>
    </source>
</evidence>
<evidence type="ECO:0000250" key="3">
    <source>
        <dbReference type="UniProtKB" id="P18969"/>
    </source>
</evidence>
<evidence type="ECO:0000250" key="4">
    <source>
        <dbReference type="UniProtKB" id="P69905"/>
    </source>
</evidence>
<evidence type="ECO:0000255" key="5">
    <source>
        <dbReference type="PROSITE-ProRule" id="PRU00238"/>
    </source>
</evidence>
<gene>
    <name type="primary">HBA</name>
</gene>
<keyword id="KW-0007">Acetylation</keyword>
<keyword id="KW-0903">Direct protein sequencing</keyword>
<keyword id="KW-0349">Heme</keyword>
<keyword id="KW-0408">Iron</keyword>
<keyword id="KW-0479">Metal-binding</keyword>
<keyword id="KW-0561">Oxygen transport</keyword>
<keyword id="KW-0597">Phosphoprotein</keyword>
<keyword id="KW-1185">Reference proteome</keyword>
<keyword id="KW-0813">Transport</keyword>
<name>HBA_SAPAP</name>